<dbReference type="EC" id="1.13.11.5" evidence="1"/>
<dbReference type="EMBL" id="CP000526">
    <property type="protein sequence ID" value="ABM49776.1"/>
    <property type="molecule type" value="Genomic_DNA"/>
</dbReference>
<dbReference type="SMR" id="A1V1U3"/>
<dbReference type="KEGG" id="bmv:BMASAVP1_A0856"/>
<dbReference type="HOGENOM" id="CLU_027174_0_0_4"/>
<dbReference type="UniPathway" id="UPA00139">
    <property type="reaction ID" value="UER00339"/>
</dbReference>
<dbReference type="GO" id="GO:0005737">
    <property type="term" value="C:cytoplasm"/>
    <property type="evidence" value="ECO:0007669"/>
    <property type="project" value="TreeGrafter"/>
</dbReference>
<dbReference type="GO" id="GO:0004411">
    <property type="term" value="F:homogentisate 1,2-dioxygenase activity"/>
    <property type="evidence" value="ECO:0007669"/>
    <property type="project" value="UniProtKB-UniRule"/>
</dbReference>
<dbReference type="GO" id="GO:0005506">
    <property type="term" value="F:iron ion binding"/>
    <property type="evidence" value="ECO:0007669"/>
    <property type="project" value="UniProtKB-UniRule"/>
</dbReference>
<dbReference type="GO" id="GO:0006559">
    <property type="term" value="P:L-phenylalanine catabolic process"/>
    <property type="evidence" value="ECO:0007669"/>
    <property type="project" value="UniProtKB-UniRule"/>
</dbReference>
<dbReference type="GO" id="GO:0006572">
    <property type="term" value="P:tyrosine catabolic process"/>
    <property type="evidence" value="ECO:0007669"/>
    <property type="project" value="UniProtKB-UniRule"/>
</dbReference>
<dbReference type="CDD" id="cd07000">
    <property type="entry name" value="cupin_HGO_N"/>
    <property type="match status" value="1"/>
</dbReference>
<dbReference type="FunFam" id="2.60.120.10:FF:000034">
    <property type="entry name" value="Homogentisate 1,2-dioxygenase"/>
    <property type="match status" value="1"/>
</dbReference>
<dbReference type="Gene3D" id="2.60.120.10">
    <property type="entry name" value="Jelly Rolls"/>
    <property type="match status" value="1"/>
</dbReference>
<dbReference type="HAMAP" id="MF_00334">
    <property type="entry name" value="Homogentis_dioxygen"/>
    <property type="match status" value="1"/>
</dbReference>
<dbReference type="InterPro" id="IPR046451">
    <property type="entry name" value="HgmA_C"/>
</dbReference>
<dbReference type="InterPro" id="IPR046452">
    <property type="entry name" value="HgmA_N"/>
</dbReference>
<dbReference type="InterPro" id="IPR005708">
    <property type="entry name" value="Homogentis_dOase"/>
</dbReference>
<dbReference type="InterPro" id="IPR022950">
    <property type="entry name" value="Homogentis_dOase_bac"/>
</dbReference>
<dbReference type="InterPro" id="IPR014710">
    <property type="entry name" value="RmlC-like_jellyroll"/>
</dbReference>
<dbReference type="InterPro" id="IPR011051">
    <property type="entry name" value="RmlC_Cupin_sf"/>
</dbReference>
<dbReference type="NCBIfam" id="TIGR01015">
    <property type="entry name" value="hmgA"/>
    <property type="match status" value="1"/>
</dbReference>
<dbReference type="PANTHER" id="PTHR11056">
    <property type="entry name" value="HOMOGENTISATE 1,2-DIOXYGENASE"/>
    <property type="match status" value="1"/>
</dbReference>
<dbReference type="PANTHER" id="PTHR11056:SF0">
    <property type="entry name" value="HOMOGENTISATE 1,2-DIOXYGENASE"/>
    <property type="match status" value="1"/>
</dbReference>
<dbReference type="Pfam" id="PF04209">
    <property type="entry name" value="HgmA_C"/>
    <property type="match status" value="1"/>
</dbReference>
<dbReference type="Pfam" id="PF20510">
    <property type="entry name" value="HgmA_N"/>
    <property type="match status" value="1"/>
</dbReference>
<dbReference type="SUPFAM" id="SSF51182">
    <property type="entry name" value="RmlC-like cupins"/>
    <property type="match status" value="1"/>
</dbReference>
<protein>
    <recommendedName>
        <fullName evidence="1">Homogentisate 1,2-dioxygenase</fullName>
        <shortName evidence="1">HGDO</shortName>
        <ecNumber evidence="1">1.13.11.5</ecNumber>
    </recommendedName>
    <alternativeName>
        <fullName evidence="1">Homogentisate oxygenase</fullName>
    </alternativeName>
    <alternativeName>
        <fullName evidence="1">Homogentisic acid oxidase</fullName>
    </alternativeName>
    <alternativeName>
        <fullName evidence="1">Homogentisicase</fullName>
    </alternativeName>
</protein>
<keyword id="KW-0223">Dioxygenase</keyword>
<keyword id="KW-0408">Iron</keyword>
<keyword id="KW-0479">Metal-binding</keyword>
<keyword id="KW-0560">Oxidoreductase</keyword>
<keyword id="KW-0585">Phenylalanine catabolism</keyword>
<keyword id="KW-0828">Tyrosine catabolism</keyword>
<gene>
    <name evidence="1" type="primary">hmgA</name>
    <name type="ordered locus">BMASAVP1_A0856</name>
</gene>
<feature type="chain" id="PRO_1000019526" description="Homogentisate 1,2-dioxygenase">
    <location>
        <begin position="1"/>
        <end position="450"/>
    </location>
</feature>
<feature type="active site" description="Proton acceptor" evidence="1">
    <location>
        <position position="304"/>
    </location>
</feature>
<feature type="binding site" evidence="1">
    <location>
        <position position="347"/>
    </location>
    <ligand>
        <name>Fe cation</name>
        <dbReference type="ChEBI" id="CHEBI:24875"/>
    </ligand>
</feature>
<feature type="binding site" evidence="1">
    <location>
        <position position="353"/>
    </location>
    <ligand>
        <name>Fe cation</name>
        <dbReference type="ChEBI" id="CHEBI:24875"/>
    </ligand>
</feature>
<feature type="binding site" evidence="1">
    <location>
        <position position="362"/>
    </location>
    <ligand>
        <name>homogentisate</name>
        <dbReference type="ChEBI" id="CHEBI:16169"/>
    </ligand>
</feature>
<feature type="binding site" evidence="1">
    <location>
        <position position="383"/>
    </location>
    <ligand>
        <name>Fe cation</name>
        <dbReference type="ChEBI" id="CHEBI:24875"/>
    </ligand>
</feature>
<feature type="binding site" evidence="1">
    <location>
        <position position="383"/>
    </location>
    <ligand>
        <name>homogentisate</name>
        <dbReference type="ChEBI" id="CHEBI:16169"/>
    </ligand>
</feature>
<proteinExistence type="inferred from homology"/>
<organism>
    <name type="scientific">Burkholderia mallei (strain SAVP1)</name>
    <dbReference type="NCBI Taxonomy" id="320388"/>
    <lineage>
        <taxon>Bacteria</taxon>
        <taxon>Pseudomonadati</taxon>
        <taxon>Pseudomonadota</taxon>
        <taxon>Betaproteobacteria</taxon>
        <taxon>Burkholderiales</taxon>
        <taxon>Burkholderiaceae</taxon>
        <taxon>Burkholderia</taxon>
        <taxon>pseudomallei group</taxon>
    </lineage>
</organism>
<accession>A1V1U3</accession>
<comment type="function">
    <text evidence="1">Involved in the catabolism of homogentisate (2,5-dihydroxyphenylacetate or 2,5-OH-PhAc), a central intermediate in the degradation of phenylalanine and tyrosine. Catalyzes the oxidative ring cleavage of the aromatic ring of homogentisate to yield maleylacetoacetate.</text>
</comment>
<comment type="catalytic activity">
    <reaction evidence="1">
        <text>homogentisate + O2 = 4-maleylacetoacetate + H(+)</text>
        <dbReference type="Rhea" id="RHEA:15449"/>
        <dbReference type="ChEBI" id="CHEBI:15378"/>
        <dbReference type="ChEBI" id="CHEBI:15379"/>
        <dbReference type="ChEBI" id="CHEBI:16169"/>
        <dbReference type="ChEBI" id="CHEBI:17105"/>
        <dbReference type="EC" id="1.13.11.5"/>
    </reaction>
</comment>
<comment type="cofactor">
    <cofactor evidence="1">
        <name>Fe cation</name>
        <dbReference type="ChEBI" id="CHEBI:24875"/>
    </cofactor>
</comment>
<comment type="pathway">
    <text evidence="1">Amino-acid degradation; L-phenylalanine degradation; acetoacetate and fumarate from L-phenylalanine: step 4/6.</text>
</comment>
<comment type="subunit">
    <text evidence="1">Hexamer; dimer of trimers.</text>
</comment>
<comment type="similarity">
    <text evidence="1">Belongs to the homogentisate dioxygenase family.</text>
</comment>
<reference key="1">
    <citation type="journal article" date="2010" name="Genome Biol. Evol.">
        <title>Continuing evolution of Burkholderia mallei through genome reduction and large-scale rearrangements.</title>
        <authorList>
            <person name="Losada L."/>
            <person name="Ronning C.M."/>
            <person name="DeShazer D."/>
            <person name="Woods D."/>
            <person name="Fedorova N."/>
            <person name="Kim H.S."/>
            <person name="Shabalina S.A."/>
            <person name="Pearson T.R."/>
            <person name="Brinkac L."/>
            <person name="Tan P."/>
            <person name="Nandi T."/>
            <person name="Crabtree J."/>
            <person name="Badger J."/>
            <person name="Beckstrom-Sternberg S."/>
            <person name="Saqib M."/>
            <person name="Schutzer S.E."/>
            <person name="Keim P."/>
            <person name="Nierman W.C."/>
        </authorList>
    </citation>
    <scope>NUCLEOTIDE SEQUENCE [LARGE SCALE GENOMIC DNA]</scope>
    <source>
        <strain>SAVP1</strain>
    </source>
</reference>
<sequence>MERTTIMTLDFSKPGEAGYQSGFANEFATEALPGALPHARNSPQRAPYGLYAEQFSGTAFTAPRGHNRRSWLYRIRPAAVHRPFELVSGERRIVAEFGDSDDVPPTPPNQLRWDPLPMPAQPTDFVDGWVTMAGNGSAAAMSGCAIHLYAANRSMRERFFYSADGELLIVPQEGRLFIMTELGRLDVEPFEIAVIPRGVRFAVALPDGRARGYVCENFGALLRLPDLGPIGSNGLANPRDFLTPHASYEDREGAFELVAKLNGRLWRADIDHSPFDVVAWHGNYAPYKYDLRHFNTIGSISYDHPDPSIFLVLQSQSDTPGVDAIDFVIFPPRWLAAEDTFRPPWFHRNVASEFMGLVHGVYDAKAEGFVPGGASLHNCMSGHGPDADTFEKASSIDTSKPNKVGDTMAFMFETRTLIRPTRFALDTAQLQANYFECWQGLKKHFNPEQR</sequence>
<evidence type="ECO:0000255" key="1">
    <source>
        <dbReference type="HAMAP-Rule" id="MF_00334"/>
    </source>
</evidence>
<name>HGD_BURMS</name>